<proteinExistence type="inferred from homology"/>
<comment type="function">
    <text evidence="1">One of the proteins required for the normal export of preproteins out of the cell cytoplasm. It is a molecular chaperone that binds to a subset of precursor proteins, maintaining them in a translocation-competent state. It also specifically binds to its receptor SecA.</text>
</comment>
<comment type="subunit">
    <text evidence="1">Homotetramer, a dimer of dimers. One homotetramer interacts with 1 SecA dimer.</text>
</comment>
<comment type="subcellular location">
    <subcellularLocation>
        <location evidence="1">Cytoplasm</location>
    </subcellularLocation>
</comment>
<comment type="similarity">
    <text evidence="1">Belongs to the SecB family.</text>
</comment>
<name>SECB_RICTY</name>
<feature type="chain" id="PRO_0000055411" description="Protein-export protein SecB">
    <location>
        <begin position="1"/>
        <end position="152"/>
    </location>
</feature>
<feature type="sequence conflict" description="In Ref. 1; AAL82789." evidence="2" ref="1">
    <original>S</original>
    <variation>T</variation>
    <location>
        <position position="6"/>
    </location>
</feature>
<dbReference type="EMBL" id="AY078351">
    <property type="protein sequence ID" value="AAL82789.1"/>
    <property type="molecule type" value="Genomic_DNA"/>
</dbReference>
<dbReference type="EMBL" id="AE017197">
    <property type="protein sequence ID" value="AAU03548.1"/>
    <property type="molecule type" value="Genomic_DNA"/>
</dbReference>
<dbReference type="RefSeq" id="WP_011190535.1">
    <property type="nucleotide sequence ID" value="NC_006142.1"/>
</dbReference>
<dbReference type="SMR" id="Q68XU4"/>
<dbReference type="KEGG" id="rty:RT0062"/>
<dbReference type="eggNOG" id="COG1952">
    <property type="taxonomic scope" value="Bacteria"/>
</dbReference>
<dbReference type="HOGENOM" id="CLU_111574_0_0_5"/>
<dbReference type="OrthoDB" id="9795145at2"/>
<dbReference type="Proteomes" id="UP000000604">
    <property type="component" value="Chromosome"/>
</dbReference>
<dbReference type="GO" id="GO:0005737">
    <property type="term" value="C:cytoplasm"/>
    <property type="evidence" value="ECO:0007669"/>
    <property type="project" value="UniProtKB-SubCell"/>
</dbReference>
<dbReference type="GO" id="GO:0051082">
    <property type="term" value="F:unfolded protein binding"/>
    <property type="evidence" value="ECO:0007669"/>
    <property type="project" value="InterPro"/>
</dbReference>
<dbReference type="GO" id="GO:0006457">
    <property type="term" value="P:protein folding"/>
    <property type="evidence" value="ECO:0007669"/>
    <property type="project" value="UniProtKB-UniRule"/>
</dbReference>
<dbReference type="GO" id="GO:0051262">
    <property type="term" value="P:protein tetramerization"/>
    <property type="evidence" value="ECO:0007669"/>
    <property type="project" value="InterPro"/>
</dbReference>
<dbReference type="GO" id="GO:0015031">
    <property type="term" value="P:protein transport"/>
    <property type="evidence" value="ECO:0007669"/>
    <property type="project" value="UniProtKB-UniRule"/>
</dbReference>
<dbReference type="CDD" id="cd00557">
    <property type="entry name" value="Translocase_SecB"/>
    <property type="match status" value="1"/>
</dbReference>
<dbReference type="Gene3D" id="3.10.420.10">
    <property type="entry name" value="SecB-like"/>
    <property type="match status" value="1"/>
</dbReference>
<dbReference type="HAMAP" id="MF_00821">
    <property type="entry name" value="SecB"/>
    <property type="match status" value="1"/>
</dbReference>
<dbReference type="InterPro" id="IPR003708">
    <property type="entry name" value="SecB"/>
</dbReference>
<dbReference type="InterPro" id="IPR035958">
    <property type="entry name" value="SecB-like_sf"/>
</dbReference>
<dbReference type="NCBIfam" id="NF004392">
    <property type="entry name" value="PRK05751.1-3"/>
    <property type="match status" value="1"/>
</dbReference>
<dbReference type="NCBIfam" id="TIGR00809">
    <property type="entry name" value="secB"/>
    <property type="match status" value="1"/>
</dbReference>
<dbReference type="PANTHER" id="PTHR36918">
    <property type="match status" value="1"/>
</dbReference>
<dbReference type="PANTHER" id="PTHR36918:SF1">
    <property type="entry name" value="PROTEIN-EXPORT PROTEIN SECB"/>
    <property type="match status" value="1"/>
</dbReference>
<dbReference type="Pfam" id="PF02556">
    <property type="entry name" value="SecB"/>
    <property type="match status" value="1"/>
</dbReference>
<dbReference type="PRINTS" id="PR01594">
    <property type="entry name" value="SECBCHAPRONE"/>
</dbReference>
<dbReference type="SUPFAM" id="SSF54611">
    <property type="entry name" value="SecB-like"/>
    <property type="match status" value="1"/>
</dbReference>
<protein>
    <recommendedName>
        <fullName evidence="1">Protein-export protein SecB</fullName>
    </recommendedName>
</protein>
<organism>
    <name type="scientific">Rickettsia typhi (strain ATCC VR-144 / Wilmington)</name>
    <dbReference type="NCBI Taxonomy" id="257363"/>
    <lineage>
        <taxon>Bacteria</taxon>
        <taxon>Pseudomonadati</taxon>
        <taxon>Pseudomonadota</taxon>
        <taxon>Alphaproteobacteria</taxon>
        <taxon>Rickettsiales</taxon>
        <taxon>Rickettsiaceae</taxon>
        <taxon>Rickettsieae</taxon>
        <taxon>Rickettsia</taxon>
        <taxon>typhus group</taxon>
    </lineage>
</organism>
<sequence>MSTINSDTSEAMPHISVNAQYIKDLSLENPSAPSSLAALDQRPQIDLSLDINITNLSDENFYEVELNIEAIARNEKYKLFQIELKYAGVFNLINIDSEQHPILLSVHCPAMIFPFARKIIASCTQDAGFQPLMIDPIDFGALYHKKMSEHQN</sequence>
<gene>
    <name evidence="1" type="primary">secB</name>
    <name type="ordered locus">RT0062</name>
</gene>
<evidence type="ECO:0000255" key="1">
    <source>
        <dbReference type="HAMAP-Rule" id="MF_00821"/>
    </source>
</evidence>
<evidence type="ECO:0000305" key="2"/>
<keyword id="KW-0143">Chaperone</keyword>
<keyword id="KW-0963">Cytoplasm</keyword>
<keyword id="KW-0653">Protein transport</keyword>
<keyword id="KW-0811">Translocation</keyword>
<keyword id="KW-0813">Transport</keyword>
<reference key="1">
    <citation type="submission" date="2002-02" db="EMBL/GenBank/DDBJ databases">
        <title>Characterization of the Sec operon of the typhus group Rickettsia.</title>
        <authorList>
            <person name="On'gele E.A."/>
            <person name="Radulovic S."/>
            <person name="Azad A.F."/>
        </authorList>
    </citation>
    <scope>NUCLEOTIDE SEQUENCE [GENOMIC DNA]</scope>
</reference>
<reference key="2">
    <citation type="journal article" date="2004" name="J. Bacteriol.">
        <title>Complete genome sequence of Rickettsia typhi and comparison with sequences of other Rickettsiae.</title>
        <authorList>
            <person name="McLeod M.P."/>
            <person name="Qin X."/>
            <person name="Karpathy S.E."/>
            <person name="Gioia J."/>
            <person name="Highlander S.K."/>
            <person name="Fox G.E."/>
            <person name="McNeill T.Z."/>
            <person name="Jiang H."/>
            <person name="Muzny D."/>
            <person name="Jacob L.S."/>
            <person name="Hawes A.C."/>
            <person name="Sodergren E."/>
            <person name="Gill R."/>
            <person name="Hume J."/>
            <person name="Morgan M."/>
            <person name="Fan G."/>
            <person name="Amin A.G."/>
            <person name="Gibbs R.A."/>
            <person name="Hong C."/>
            <person name="Yu X.-J."/>
            <person name="Walker D.H."/>
            <person name="Weinstock G.M."/>
        </authorList>
    </citation>
    <scope>NUCLEOTIDE SEQUENCE [LARGE SCALE GENOMIC DNA]</scope>
    <source>
        <strain>ATCC VR-144 / Wilmington</strain>
    </source>
</reference>
<accession>Q68XU4</accession>
<accession>Q8RLP6</accession>